<evidence type="ECO:0000250" key="1"/>
<evidence type="ECO:0000255" key="2">
    <source>
        <dbReference type="PROSITE-ProRule" id="PRU00837"/>
    </source>
</evidence>
<evidence type="ECO:0000256" key="3">
    <source>
        <dbReference type="SAM" id="MobiDB-lite"/>
    </source>
</evidence>
<feature type="initiator methionine" description="Removed" evidence="1">
    <location>
        <position position="1"/>
    </location>
</feature>
<feature type="chain" id="PRO_0000195936" description="Histone H1C">
    <location>
        <begin position="2"/>
        <end position="221"/>
    </location>
</feature>
<feature type="domain" description="H15" evidence="2">
    <location>
        <begin position="39"/>
        <end position="112"/>
    </location>
</feature>
<feature type="region of interest" description="Disordered" evidence="3">
    <location>
        <begin position="1"/>
        <end position="44"/>
    </location>
</feature>
<feature type="region of interest" description="Disordered" evidence="3">
    <location>
        <begin position="123"/>
        <end position="221"/>
    </location>
</feature>
<feature type="compositionally biased region" description="Low complexity" evidence="3">
    <location>
        <begin position="1"/>
        <end position="11"/>
    </location>
</feature>
<feature type="compositionally biased region" description="Low complexity" evidence="3">
    <location>
        <begin position="27"/>
        <end position="44"/>
    </location>
</feature>
<feature type="compositionally biased region" description="Basic residues" evidence="3">
    <location>
        <begin position="123"/>
        <end position="150"/>
    </location>
</feature>
<feature type="compositionally biased region" description="Basic residues" evidence="3">
    <location>
        <begin position="158"/>
        <end position="221"/>
    </location>
</feature>
<keyword id="KW-0158">Chromosome</keyword>
<keyword id="KW-0238">DNA-binding</keyword>
<keyword id="KW-0539">Nucleus</keyword>
<keyword id="KW-1185">Reference proteome</keyword>
<reference key="1">
    <citation type="journal article" date="1983" name="Nucleic Acids Res.">
        <title>Nucleotide sequences of H1 histone genes from Xenopus laevis. A recently diverged pair of H1 genes and an unusual H1 pseudogene.</title>
        <authorList>
            <person name="Turner P.C."/>
            <person name="Aldridge T.C."/>
            <person name="Woodland H.R."/>
            <person name="Old R.W."/>
        </authorList>
    </citation>
    <scope>NUCLEOTIDE SEQUENCE [GENOMIC DNA]</scope>
</reference>
<dbReference type="EMBL" id="J00969">
    <property type="status" value="NOT_ANNOTATED_CDS"/>
    <property type="molecule type" value="Genomic_DNA"/>
</dbReference>
<dbReference type="SMR" id="P15867"/>
<dbReference type="Proteomes" id="UP000186698">
    <property type="component" value="Unplaced"/>
</dbReference>
<dbReference type="GO" id="GO:0000786">
    <property type="term" value="C:nucleosome"/>
    <property type="evidence" value="ECO:0007669"/>
    <property type="project" value="InterPro"/>
</dbReference>
<dbReference type="GO" id="GO:0005634">
    <property type="term" value="C:nucleus"/>
    <property type="evidence" value="ECO:0007669"/>
    <property type="project" value="UniProtKB-SubCell"/>
</dbReference>
<dbReference type="GO" id="GO:0003677">
    <property type="term" value="F:DNA binding"/>
    <property type="evidence" value="ECO:0007669"/>
    <property type="project" value="UniProtKB-KW"/>
</dbReference>
<dbReference type="GO" id="GO:0030527">
    <property type="term" value="F:structural constituent of chromatin"/>
    <property type="evidence" value="ECO:0007669"/>
    <property type="project" value="InterPro"/>
</dbReference>
<dbReference type="GO" id="GO:0006334">
    <property type="term" value="P:nucleosome assembly"/>
    <property type="evidence" value="ECO:0007669"/>
    <property type="project" value="InterPro"/>
</dbReference>
<dbReference type="CDD" id="cd00073">
    <property type="entry name" value="H15"/>
    <property type="match status" value="1"/>
</dbReference>
<dbReference type="FunFam" id="1.10.10.10:FF:000075">
    <property type="entry name" value="Histone H1 like"/>
    <property type="match status" value="1"/>
</dbReference>
<dbReference type="Gene3D" id="1.10.10.10">
    <property type="entry name" value="Winged helix-like DNA-binding domain superfamily/Winged helix DNA-binding domain"/>
    <property type="match status" value="1"/>
</dbReference>
<dbReference type="InterPro" id="IPR005819">
    <property type="entry name" value="H1/H5"/>
</dbReference>
<dbReference type="InterPro" id="IPR005818">
    <property type="entry name" value="Histone_H1/H5_H15"/>
</dbReference>
<dbReference type="InterPro" id="IPR036388">
    <property type="entry name" value="WH-like_DNA-bd_sf"/>
</dbReference>
<dbReference type="InterPro" id="IPR036390">
    <property type="entry name" value="WH_DNA-bd_sf"/>
</dbReference>
<dbReference type="Pfam" id="PF00538">
    <property type="entry name" value="Linker_histone"/>
    <property type="match status" value="1"/>
</dbReference>
<dbReference type="PRINTS" id="PR00624">
    <property type="entry name" value="HISTONEH5"/>
</dbReference>
<dbReference type="SMART" id="SM00526">
    <property type="entry name" value="H15"/>
    <property type="match status" value="1"/>
</dbReference>
<dbReference type="SUPFAM" id="SSF46785">
    <property type="entry name" value="Winged helix' DNA-binding domain"/>
    <property type="match status" value="1"/>
</dbReference>
<dbReference type="PROSITE" id="PS51504">
    <property type="entry name" value="H15"/>
    <property type="match status" value="1"/>
</dbReference>
<protein>
    <recommendedName>
        <fullName>Histone H1C</fullName>
    </recommendedName>
    <alternativeName>
        <fullName>Clone XLHW8</fullName>
    </alternativeName>
</protein>
<organism>
    <name type="scientific">Xenopus laevis</name>
    <name type="common">African clawed frog</name>
    <dbReference type="NCBI Taxonomy" id="8355"/>
    <lineage>
        <taxon>Eukaryota</taxon>
        <taxon>Metazoa</taxon>
        <taxon>Chordata</taxon>
        <taxon>Craniata</taxon>
        <taxon>Vertebrata</taxon>
        <taxon>Euteleostomi</taxon>
        <taxon>Amphibia</taxon>
        <taxon>Batrachia</taxon>
        <taxon>Anura</taxon>
        <taxon>Pipoidea</taxon>
        <taxon>Pipidae</taxon>
        <taxon>Xenopodinae</taxon>
        <taxon>Xenopus</taxon>
        <taxon>Xenopus</taxon>
    </lineage>
</organism>
<comment type="function">
    <text>Histones H1 are necessary for the condensation of nucleosome chains into higher-order structures.</text>
</comment>
<comment type="subcellular location">
    <subcellularLocation>
        <location>Nucleus</location>
    </subcellularLocation>
    <subcellularLocation>
        <location>Chromosome</location>
    </subcellularLocation>
</comment>
<comment type="similarity">
    <text evidence="2">Belongs to the histone H1/H5 family.</text>
</comment>
<proteinExistence type="inferred from homology"/>
<name>H1C2_XENLA</name>
<sequence length="221" mass="22748">MTETAATETTPAAPPAEPKQKKKQQPKKAAGGAKAKKPSGPSASELIVKSVSASKERGGVSLAALKKALAAGGYNVERNNSRLKLALKALVTKGTLTQVKGSGASGSFKLNKKQLETKVKAVAKKKLVAPKAKKPVAAKKKPKSPKKPKKVSAAAAKSPKKAKKPVKAAKSPKKPKAVKPKKVTKSPAKKATKPKAAKAKIAKPKIAKAKAAKGKKAAAKK</sequence>
<accession>P15867</accession>